<keyword id="KW-0046">Antibiotic resistance</keyword>
<keyword id="KW-0997">Cell inner membrane</keyword>
<keyword id="KW-1003">Cell membrane</keyword>
<keyword id="KW-0133">Cell shape</keyword>
<keyword id="KW-0961">Cell wall biogenesis/degradation</keyword>
<keyword id="KW-0378">Hydrolase</keyword>
<keyword id="KW-0472">Membrane</keyword>
<keyword id="KW-0573">Peptidoglycan synthesis</keyword>
<keyword id="KW-1185">Reference proteome</keyword>
<keyword id="KW-0812">Transmembrane</keyword>
<keyword id="KW-1133">Transmembrane helix</keyword>
<evidence type="ECO:0000255" key="1">
    <source>
        <dbReference type="HAMAP-Rule" id="MF_01006"/>
    </source>
</evidence>
<name>UPPP_ACICJ</name>
<proteinExistence type="inferred from homology"/>
<organism>
    <name type="scientific">Acidiphilium cryptum (strain JF-5)</name>
    <dbReference type="NCBI Taxonomy" id="349163"/>
    <lineage>
        <taxon>Bacteria</taxon>
        <taxon>Pseudomonadati</taxon>
        <taxon>Pseudomonadota</taxon>
        <taxon>Alphaproteobacteria</taxon>
        <taxon>Acetobacterales</taxon>
        <taxon>Acidocellaceae</taxon>
        <taxon>Acidiphilium</taxon>
    </lineage>
</organism>
<accession>A5FWG2</accession>
<reference key="1">
    <citation type="submission" date="2007-05" db="EMBL/GenBank/DDBJ databases">
        <title>Complete sequence of chromosome of Acidiphilium cryptum JF-5.</title>
        <authorList>
            <consortium name="US DOE Joint Genome Institute"/>
            <person name="Copeland A."/>
            <person name="Lucas S."/>
            <person name="Lapidus A."/>
            <person name="Barry K."/>
            <person name="Detter J.C."/>
            <person name="Glavina del Rio T."/>
            <person name="Hammon N."/>
            <person name="Israni S."/>
            <person name="Dalin E."/>
            <person name="Tice H."/>
            <person name="Pitluck S."/>
            <person name="Sims D."/>
            <person name="Brettin T."/>
            <person name="Bruce D."/>
            <person name="Han C."/>
            <person name="Schmutz J."/>
            <person name="Larimer F."/>
            <person name="Land M."/>
            <person name="Hauser L."/>
            <person name="Kyrpides N."/>
            <person name="Kim E."/>
            <person name="Magnuson T."/>
            <person name="Richardson P."/>
        </authorList>
    </citation>
    <scope>NUCLEOTIDE SEQUENCE [LARGE SCALE GENOMIC DNA]</scope>
    <source>
        <strain>JF-5</strain>
    </source>
</reference>
<protein>
    <recommendedName>
        <fullName evidence="1">Undecaprenyl-diphosphatase</fullName>
        <ecNumber evidence="1">3.6.1.27</ecNumber>
    </recommendedName>
    <alternativeName>
        <fullName evidence="1">Bacitracin resistance protein</fullName>
    </alternativeName>
    <alternativeName>
        <fullName evidence="1">Undecaprenyl pyrophosphate phosphatase</fullName>
    </alternativeName>
</protein>
<feature type="chain" id="PRO_1000062783" description="Undecaprenyl-diphosphatase">
    <location>
        <begin position="1"/>
        <end position="282"/>
    </location>
</feature>
<feature type="transmembrane region" description="Helical" evidence="1">
    <location>
        <begin position="7"/>
        <end position="29"/>
    </location>
</feature>
<feature type="transmembrane region" description="Helical" evidence="1">
    <location>
        <begin position="45"/>
        <end position="65"/>
    </location>
</feature>
<feature type="transmembrane region" description="Helical" evidence="1">
    <location>
        <begin position="89"/>
        <end position="109"/>
    </location>
</feature>
<feature type="transmembrane region" description="Helical" evidence="1">
    <location>
        <begin position="115"/>
        <end position="135"/>
    </location>
</feature>
<feature type="transmembrane region" description="Helical" evidence="1">
    <location>
        <begin position="153"/>
        <end position="173"/>
    </location>
</feature>
<feature type="transmembrane region" description="Helical" evidence="1">
    <location>
        <begin position="196"/>
        <end position="216"/>
    </location>
</feature>
<feature type="transmembrane region" description="Helical" evidence="1">
    <location>
        <begin position="229"/>
        <end position="249"/>
    </location>
</feature>
<feature type="transmembrane region" description="Helical" evidence="1">
    <location>
        <begin position="258"/>
        <end position="278"/>
    </location>
</feature>
<dbReference type="EC" id="3.6.1.27" evidence="1"/>
<dbReference type="EMBL" id="CP000697">
    <property type="protein sequence ID" value="ABQ29944.1"/>
    <property type="molecule type" value="Genomic_DNA"/>
</dbReference>
<dbReference type="RefSeq" id="WP_011941726.1">
    <property type="nucleotide sequence ID" value="NC_009484.1"/>
</dbReference>
<dbReference type="SMR" id="A5FWG2"/>
<dbReference type="STRING" id="349163.Acry_0723"/>
<dbReference type="KEGG" id="acr:Acry_0723"/>
<dbReference type="eggNOG" id="COG1968">
    <property type="taxonomic scope" value="Bacteria"/>
</dbReference>
<dbReference type="HOGENOM" id="CLU_060296_1_2_5"/>
<dbReference type="Proteomes" id="UP000000245">
    <property type="component" value="Chromosome"/>
</dbReference>
<dbReference type="GO" id="GO:0005886">
    <property type="term" value="C:plasma membrane"/>
    <property type="evidence" value="ECO:0007669"/>
    <property type="project" value="UniProtKB-SubCell"/>
</dbReference>
<dbReference type="GO" id="GO:0050380">
    <property type="term" value="F:undecaprenyl-diphosphatase activity"/>
    <property type="evidence" value="ECO:0007669"/>
    <property type="project" value="UniProtKB-UniRule"/>
</dbReference>
<dbReference type="GO" id="GO:0071555">
    <property type="term" value="P:cell wall organization"/>
    <property type="evidence" value="ECO:0007669"/>
    <property type="project" value="UniProtKB-KW"/>
</dbReference>
<dbReference type="GO" id="GO:0009252">
    <property type="term" value="P:peptidoglycan biosynthetic process"/>
    <property type="evidence" value="ECO:0007669"/>
    <property type="project" value="UniProtKB-KW"/>
</dbReference>
<dbReference type="GO" id="GO:0008360">
    <property type="term" value="P:regulation of cell shape"/>
    <property type="evidence" value="ECO:0007669"/>
    <property type="project" value="UniProtKB-KW"/>
</dbReference>
<dbReference type="GO" id="GO:0046677">
    <property type="term" value="P:response to antibiotic"/>
    <property type="evidence" value="ECO:0007669"/>
    <property type="project" value="UniProtKB-UniRule"/>
</dbReference>
<dbReference type="HAMAP" id="MF_01006">
    <property type="entry name" value="Undec_diphosphatase"/>
    <property type="match status" value="1"/>
</dbReference>
<dbReference type="InterPro" id="IPR003824">
    <property type="entry name" value="UppP"/>
</dbReference>
<dbReference type="NCBIfam" id="NF001397">
    <property type="entry name" value="PRK00281.3-4"/>
    <property type="match status" value="1"/>
</dbReference>
<dbReference type="PANTHER" id="PTHR30622">
    <property type="entry name" value="UNDECAPRENYL-DIPHOSPHATASE"/>
    <property type="match status" value="1"/>
</dbReference>
<dbReference type="PANTHER" id="PTHR30622:SF4">
    <property type="entry name" value="UNDECAPRENYL-DIPHOSPHATASE"/>
    <property type="match status" value="1"/>
</dbReference>
<dbReference type="Pfam" id="PF02673">
    <property type="entry name" value="BacA"/>
    <property type="match status" value="1"/>
</dbReference>
<comment type="function">
    <text evidence="1">Catalyzes the dephosphorylation of undecaprenyl diphosphate (UPP). Confers resistance to bacitracin.</text>
</comment>
<comment type="catalytic activity">
    <reaction evidence="1">
        <text>di-trans,octa-cis-undecaprenyl diphosphate + H2O = di-trans,octa-cis-undecaprenyl phosphate + phosphate + H(+)</text>
        <dbReference type="Rhea" id="RHEA:28094"/>
        <dbReference type="ChEBI" id="CHEBI:15377"/>
        <dbReference type="ChEBI" id="CHEBI:15378"/>
        <dbReference type="ChEBI" id="CHEBI:43474"/>
        <dbReference type="ChEBI" id="CHEBI:58405"/>
        <dbReference type="ChEBI" id="CHEBI:60392"/>
        <dbReference type="EC" id="3.6.1.27"/>
    </reaction>
</comment>
<comment type="subcellular location">
    <subcellularLocation>
        <location evidence="1">Cell inner membrane</location>
        <topology evidence="1">Multi-pass membrane protein</topology>
    </subcellularLocation>
</comment>
<comment type="miscellaneous">
    <text>Bacitracin is thought to be involved in the inhibition of peptidoglycan synthesis by sequestering undecaprenyl diphosphate, thereby reducing the pool of lipid carrier available.</text>
</comment>
<comment type="similarity">
    <text evidence="1">Belongs to the UppP family.</text>
</comment>
<sequence>MTPLIAVLFAILQGATELFPVSSLGHVVIVPALLHWPIDQASPSFLPFVVMLHVGTATALLLYFWREWWAMLAGLLGRGEPGEVDAQRGLLLRLVVATLPAVLIGFALKKPIQHLFASPEIAAAFLIANGAVLIIGERLRRRRAGNGFGIGQLTLRDSLVIGLFQCLAFLPGLSRSGSAIVGGLTRGLDHEAAARFAFLMATPVIAGAAVIEVPHLLHHAAAARGMFGTALLAAVVAGVVAYLSTAFLMRYFRNHDRWALGPFAAYCALFGALSLILIPFGA</sequence>
<gene>
    <name evidence="1" type="primary">uppP</name>
    <name type="ordered locus">Acry_0723</name>
</gene>